<gene>
    <name evidence="1" type="primary">rpmG</name>
    <name type="ordered locus">msr0848</name>
</gene>
<reference key="1">
    <citation type="journal article" date="2000" name="DNA Res.">
        <title>Complete genome structure of the nitrogen-fixing symbiotic bacterium Mesorhizobium loti.</title>
        <authorList>
            <person name="Kaneko T."/>
            <person name="Nakamura Y."/>
            <person name="Sato S."/>
            <person name="Asamizu E."/>
            <person name="Kato T."/>
            <person name="Sasamoto S."/>
            <person name="Watanabe A."/>
            <person name="Idesawa K."/>
            <person name="Ishikawa A."/>
            <person name="Kawashima K."/>
            <person name="Kimura T."/>
            <person name="Kishida Y."/>
            <person name="Kiyokawa C."/>
            <person name="Kohara M."/>
            <person name="Matsumoto M."/>
            <person name="Matsuno A."/>
            <person name="Mochizuki Y."/>
            <person name="Nakayama S."/>
            <person name="Nakazaki N."/>
            <person name="Shimpo S."/>
            <person name="Sugimoto M."/>
            <person name="Takeuchi C."/>
            <person name="Yamada M."/>
            <person name="Tabata S."/>
        </authorList>
    </citation>
    <scope>NUCLEOTIDE SEQUENCE [LARGE SCALE GENOMIC DNA]</scope>
    <source>
        <strain>LMG 29417 / CECT 9101 / MAFF 303099</strain>
    </source>
</reference>
<proteinExistence type="inferred from homology"/>
<organism>
    <name type="scientific">Mesorhizobium japonicum (strain LMG 29417 / CECT 9101 / MAFF 303099)</name>
    <name type="common">Mesorhizobium loti (strain MAFF 303099)</name>
    <dbReference type="NCBI Taxonomy" id="266835"/>
    <lineage>
        <taxon>Bacteria</taxon>
        <taxon>Pseudomonadati</taxon>
        <taxon>Pseudomonadota</taxon>
        <taxon>Alphaproteobacteria</taxon>
        <taxon>Hyphomicrobiales</taxon>
        <taxon>Phyllobacteriaceae</taxon>
        <taxon>Mesorhizobium</taxon>
    </lineage>
</organism>
<evidence type="ECO:0000255" key="1">
    <source>
        <dbReference type="HAMAP-Rule" id="MF_00294"/>
    </source>
</evidence>
<evidence type="ECO:0000305" key="2"/>
<name>RL33_RHILO</name>
<sequence>MAKAANIKIKLLSTADTGFFYVTSKNSRTKTDKLSFRKYDPVAKKHVEFKETKIK</sequence>
<protein>
    <recommendedName>
        <fullName evidence="1">Large ribosomal subunit protein bL33</fullName>
    </recommendedName>
    <alternativeName>
        <fullName evidence="2">50S ribosomal protein L33</fullName>
    </alternativeName>
</protein>
<keyword id="KW-0687">Ribonucleoprotein</keyword>
<keyword id="KW-0689">Ribosomal protein</keyword>
<comment type="similarity">
    <text evidence="1">Belongs to the bacterial ribosomal protein bL33 family.</text>
</comment>
<feature type="chain" id="PRO_0000170203" description="Large ribosomal subunit protein bL33">
    <location>
        <begin position="1"/>
        <end position="55"/>
    </location>
</feature>
<accession>Q98LW4</accession>
<dbReference type="EMBL" id="BA000012">
    <property type="protein sequence ID" value="BAB48349.1"/>
    <property type="molecule type" value="Genomic_DNA"/>
</dbReference>
<dbReference type="RefSeq" id="WP_006201775.1">
    <property type="nucleotide sequence ID" value="NC_002678.2"/>
</dbReference>
<dbReference type="SMR" id="Q98LW4"/>
<dbReference type="GeneID" id="91560988"/>
<dbReference type="KEGG" id="mlo:msr0848"/>
<dbReference type="eggNOG" id="COG0267">
    <property type="taxonomic scope" value="Bacteria"/>
</dbReference>
<dbReference type="HOGENOM" id="CLU_190949_1_1_5"/>
<dbReference type="Proteomes" id="UP000000552">
    <property type="component" value="Chromosome"/>
</dbReference>
<dbReference type="GO" id="GO:0022625">
    <property type="term" value="C:cytosolic large ribosomal subunit"/>
    <property type="evidence" value="ECO:0007669"/>
    <property type="project" value="TreeGrafter"/>
</dbReference>
<dbReference type="GO" id="GO:0003735">
    <property type="term" value="F:structural constituent of ribosome"/>
    <property type="evidence" value="ECO:0007669"/>
    <property type="project" value="InterPro"/>
</dbReference>
<dbReference type="GO" id="GO:0006412">
    <property type="term" value="P:translation"/>
    <property type="evidence" value="ECO:0007669"/>
    <property type="project" value="UniProtKB-UniRule"/>
</dbReference>
<dbReference type="Gene3D" id="2.20.28.120">
    <property type="entry name" value="Ribosomal protein L33"/>
    <property type="match status" value="1"/>
</dbReference>
<dbReference type="HAMAP" id="MF_00294">
    <property type="entry name" value="Ribosomal_bL33"/>
    <property type="match status" value="1"/>
</dbReference>
<dbReference type="InterPro" id="IPR001705">
    <property type="entry name" value="Ribosomal_bL33"/>
</dbReference>
<dbReference type="InterPro" id="IPR018264">
    <property type="entry name" value="Ribosomal_bL33_CS"/>
</dbReference>
<dbReference type="InterPro" id="IPR038584">
    <property type="entry name" value="Ribosomal_bL33_sf"/>
</dbReference>
<dbReference type="InterPro" id="IPR011332">
    <property type="entry name" value="Ribosomal_zn-bd"/>
</dbReference>
<dbReference type="NCBIfam" id="NF001860">
    <property type="entry name" value="PRK00595.1"/>
    <property type="match status" value="1"/>
</dbReference>
<dbReference type="NCBIfam" id="TIGR01023">
    <property type="entry name" value="rpmG_bact"/>
    <property type="match status" value="1"/>
</dbReference>
<dbReference type="PANTHER" id="PTHR15238">
    <property type="entry name" value="54S RIBOSOMAL PROTEIN L39, MITOCHONDRIAL"/>
    <property type="match status" value="1"/>
</dbReference>
<dbReference type="PANTHER" id="PTHR15238:SF1">
    <property type="entry name" value="LARGE RIBOSOMAL SUBUNIT PROTEIN BL33M"/>
    <property type="match status" value="1"/>
</dbReference>
<dbReference type="Pfam" id="PF00471">
    <property type="entry name" value="Ribosomal_L33"/>
    <property type="match status" value="1"/>
</dbReference>
<dbReference type="SUPFAM" id="SSF57829">
    <property type="entry name" value="Zn-binding ribosomal proteins"/>
    <property type="match status" value="1"/>
</dbReference>
<dbReference type="PROSITE" id="PS00582">
    <property type="entry name" value="RIBOSOMAL_L33"/>
    <property type="match status" value="1"/>
</dbReference>